<accession>Q32LR5</accession>
<accession>B0S7I9</accession>
<accession>Q566T1</accession>
<keyword id="KW-0539">Nucleus</keyword>
<keyword id="KW-1185">Reference proteome</keyword>
<protein>
    <recommendedName>
        <fullName>Ashwin</fullName>
    </recommendedName>
</protein>
<evidence type="ECO:0000250" key="1">
    <source>
        <dbReference type="UniProtKB" id="Q9BVC5"/>
    </source>
</evidence>
<evidence type="ECO:0000256" key="2">
    <source>
        <dbReference type="SAM" id="MobiDB-lite"/>
    </source>
</evidence>
<evidence type="ECO:0000305" key="3"/>
<dbReference type="EMBL" id="BX842683">
    <property type="protein sequence ID" value="CAQ14278.1"/>
    <property type="molecule type" value="Genomic_DNA"/>
</dbReference>
<dbReference type="EMBL" id="BC093350">
    <property type="protein sequence ID" value="AAH93350.1"/>
    <property type="status" value="ALT_INIT"/>
    <property type="molecule type" value="mRNA"/>
</dbReference>
<dbReference type="EMBL" id="BC109457">
    <property type="protein sequence ID" value="AAI09458.1"/>
    <property type="status" value="ALT_INIT"/>
    <property type="molecule type" value="mRNA"/>
</dbReference>
<dbReference type="RefSeq" id="NP_001137405.1">
    <property type="nucleotide sequence ID" value="NM_001143933.1"/>
</dbReference>
<dbReference type="SMR" id="Q32LR5"/>
<dbReference type="FunCoup" id="Q32LR5">
    <property type="interactions" value="1888"/>
</dbReference>
<dbReference type="STRING" id="7955.ENSDARP00000061584"/>
<dbReference type="PaxDb" id="7955-ENSDARP00000061584"/>
<dbReference type="Ensembl" id="ENSDART00000061585">
    <property type="protein sequence ID" value="ENSDARP00000061584"/>
    <property type="gene ID" value="ENSDARG00000042025"/>
</dbReference>
<dbReference type="GeneID" id="553393"/>
<dbReference type="KEGG" id="dre:553393"/>
<dbReference type="AGR" id="ZFIN:ZDB-GENE-050809-8"/>
<dbReference type="ZFIN" id="ZDB-GENE-050809-8">
    <property type="gene designation" value="si:dkeyp-118h3.6"/>
</dbReference>
<dbReference type="eggNOG" id="ENOG502S0PQ">
    <property type="taxonomic scope" value="Eukaryota"/>
</dbReference>
<dbReference type="HOGENOM" id="CLU_104242_0_0_1"/>
<dbReference type="InParanoid" id="Q32LR5"/>
<dbReference type="OMA" id="SRWGKRM"/>
<dbReference type="OrthoDB" id="10071059at2759"/>
<dbReference type="PhylomeDB" id="Q32LR5"/>
<dbReference type="TreeFam" id="TF332084"/>
<dbReference type="PRO" id="PR:Q32LR5"/>
<dbReference type="Proteomes" id="UP000000437">
    <property type="component" value="Chromosome 9"/>
</dbReference>
<dbReference type="Bgee" id="ENSDARG00000042025">
    <property type="expression patterns" value="Expressed in mature ovarian follicle and 21 other cell types or tissues"/>
</dbReference>
<dbReference type="GO" id="GO:0005634">
    <property type="term" value="C:nucleus"/>
    <property type="evidence" value="ECO:0000250"/>
    <property type="project" value="UniProtKB"/>
</dbReference>
<dbReference type="GO" id="GO:0072669">
    <property type="term" value="C:tRNA-splicing ligase complex"/>
    <property type="evidence" value="ECO:0000250"/>
    <property type="project" value="UniProtKB"/>
</dbReference>
<dbReference type="GO" id="GO:0048598">
    <property type="term" value="P:embryonic morphogenesis"/>
    <property type="evidence" value="ECO:0007669"/>
    <property type="project" value="InterPro"/>
</dbReference>
<dbReference type="InterPro" id="IPR024887">
    <property type="entry name" value="Ashwin"/>
</dbReference>
<dbReference type="PANTHER" id="PTHR28359">
    <property type="entry name" value="ASHWIN"/>
    <property type="match status" value="1"/>
</dbReference>
<dbReference type="PANTHER" id="PTHR28359:SF1">
    <property type="entry name" value="ASHWIN"/>
    <property type="match status" value="1"/>
</dbReference>
<dbReference type="Pfam" id="PF15323">
    <property type="entry name" value="Ashwin"/>
    <property type="match status" value="1"/>
</dbReference>
<reference key="1">
    <citation type="journal article" date="2013" name="Nature">
        <title>The zebrafish reference genome sequence and its relationship to the human genome.</title>
        <authorList>
            <person name="Howe K."/>
            <person name="Clark M.D."/>
            <person name="Torroja C.F."/>
            <person name="Torrance J."/>
            <person name="Berthelot C."/>
            <person name="Muffato M."/>
            <person name="Collins J.E."/>
            <person name="Humphray S."/>
            <person name="McLaren K."/>
            <person name="Matthews L."/>
            <person name="McLaren S."/>
            <person name="Sealy I."/>
            <person name="Caccamo M."/>
            <person name="Churcher C."/>
            <person name="Scott C."/>
            <person name="Barrett J.C."/>
            <person name="Koch R."/>
            <person name="Rauch G.J."/>
            <person name="White S."/>
            <person name="Chow W."/>
            <person name="Kilian B."/>
            <person name="Quintais L.T."/>
            <person name="Guerra-Assuncao J.A."/>
            <person name="Zhou Y."/>
            <person name="Gu Y."/>
            <person name="Yen J."/>
            <person name="Vogel J.H."/>
            <person name="Eyre T."/>
            <person name="Redmond S."/>
            <person name="Banerjee R."/>
            <person name="Chi J."/>
            <person name="Fu B."/>
            <person name="Langley E."/>
            <person name="Maguire S.F."/>
            <person name="Laird G.K."/>
            <person name="Lloyd D."/>
            <person name="Kenyon E."/>
            <person name="Donaldson S."/>
            <person name="Sehra H."/>
            <person name="Almeida-King J."/>
            <person name="Loveland J."/>
            <person name="Trevanion S."/>
            <person name="Jones M."/>
            <person name="Quail M."/>
            <person name="Willey D."/>
            <person name="Hunt A."/>
            <person name="Burton J."/>
            <person name="Sims S."/>
            <person name="McLay K."/>
            <person name="Plumb B."/>
            <person name="Davis J."/>
            <person name="Clee C."/>
            <person name="Oliver K."/>
            <person name="Clark R."/>
            <person name="Riddle C."/>
            <person name="Elliot D."/>
            <person name="Threadgold G."/>
            <person name="Harden G."/>
            <person name="Ware D."/>
            <person name="Begum S."/>
            <person name="Mortimore B."/>
            <person name="Kerry G."/>
            <person name="Heath P."/>
            <person name="Phillimore B."/>
            <person name="Tracey A."/>
            <person name="Corby N."/>
            <person name="Dunn M."/>
            <person name="Johnson C."/>
            <person name="Wood J."/>
            <person name="Clark S."/>
            <person name="Pelan S."/>
            <person name="Griffiths G."/>
            <person name="Smith M."/>
            <person name="Glithero R."/>
            <person name="Howden P."/>
            <person name="Barker N."/>
            <person name="Lloyd C."/>
            <person name="Stevens C."/>
            <person name="Harley J."/>
            <person name="Holt K."/>
            <person name="Panagiotidis G."/>
            <person name="Lovell J."/>
            <person name="Beasley H."/>
            <person name="Henderson C."/>
            <person name="Gordon D."/>
            <person name="Auger K."/>
            <person name="Wright D."/>
            <person name="Collins J."/>
            <person name="Raisen C."/>
            <person name="Dyer L."/>
            <person name="Leung K."/>
            <person name="Robertson L."/>
            <person name="Ambridge K."/>
            <person name="Leongamornlert D."/>
            <person name="McGuire S."/>
            <person name="Gilderthorp R."/>
            <person name="Griffiths C."/>
            <person name="Manthravadi D."/>
            <person name="Nichol S."/>
            <person name="Barker G."/>
            <person name="Whitehead S."/>
            <person name="Kay M."/>
            <person name="Brown J."/>
            <person name="Murnane C."/>
            <person name="Gray E."/>
            <person name="Humphries M."/>
            <person name="Sycamore N."/>
            <person name="Barker D."/>
            <person name="Saunders D."/>
            <person name="Wallis J."/>
            <person name="Babbage A."/>
            <person name="Hammond S."/>
            <person name="Mashreghi-Mohammadi M."/>
            <person name="Barr L."/>
            <person name="Martin S."/>
            <person name="Wray P."/>
            <person name="Ellington A."/>
            <person name="Matthews N."/>
            <person name="Ellwood M."/>
            <person name="Woodmansey R."/>
            <person name="Clark G."/>
            <person name="Cooper J."/>
            <person name="Tromans A."/>
            <person name="Grafham D."/>
            <person name="Skuce C."/>
            <person name="Pandian R."/>
            <person name="Andrews R."/>
            <person name="Harrison E."/>
            <person name="Kimberley A."/>
            <person name="Garnett J."/>
            <person name="Fosker N."/>
            <person name="Hall R."/>
            <person name="Garner P."/>
            <person name="Kelly D."/>
            <person name="Bird C."/>
            <person name="Palmer S."/>
            <person name="Gehring I."/>
            <person name="Berger A."/>
            <person name="Dooley C.M."/>
            <person name="Ersan-Urun Z."/>
            <person name="Eser C."/>
            <person name="Geiger H."/>
            <person name="Geisler M."/>
            <person name="Karotki L."/>
            <person name="Kirn A."/>
            <person name="Konantz J."/>
            <person name="Konantz M."/>
            <person name="Oberlander M."/>
            <person name="Rudolph-Geiger S."/>
            <person name="Teucke M."/>
            <person name="Lanz C."/>
            <person name="Raddatz G."/>
            <person name="Osoegawa K."/>
            <person name="Zhu B."/>
            <person name="Rapp A."/>
            <person name="Widaa S."/>
            <person name="Langford C."/>
            <person name="Yang F."/>
            <person name="Schuster S.C."/>
            <person name="Carter N.P."/>
            <person name="Harrow J."/>
            <person name="Ning Z."/>
            <person name="Herrero J."/>
            <person name="Searle S.M."/>
            <person name="Enright A."/>
            <person name="Geisler R."/>
            <person name="Plasterk R.H."/>
            <person name="Lee C."/>
            <person name="Westerfield M."/>
            <person name="de Jong P.J."/>
            <person name="Zon L.I."/>
            <person name="Postlethwait J.H."/>
            <person name="Nusslein-Volhard C."/>
            <person name="Hubbard T.J."/>
            <person name="Roest Crollius H."/>
            <person name="Rogers J."/>
            <person name="Stemple D.L."/>
        </authorList>
    </citation>
    <scope>NUCLEOTIDE SEQUENCE [LARGE SCALE GENOMIC DNA]</scope>
    <source>
        <strain>Tuebingen</strain>
    </source>
</reference>
<reference key="2">
    <citation type="submission" date="2005-11" db="EMBL/GenBank/DDBJ databases">
        <authorList>
            <consortium name="NIH - Zebrafish Gene Collection (ZGC) project"/>
        </authorList>
    </citation>
    <scope>NUCLEOTIDE SEQUENCE [LARGE SCALE MRNA]</scope>
    <source>
        <tissue>Ovary</tissue>
    </source>
</reference>
<comment type="subcellular location">
    <subcellularLocation>
        <location evidence="1">Nucleus</location>
    </subcellularLocation>
</comment>
<comment type="similarity">
    <text evidence="3">Belongs to the ashwin family.</text>
</comment>
<comment type="sequence caution" evidence="3">
    <conflict type="erroneous initiation">
        <sequence resource="EMBL-CDS" id="AAH93350"/>
    </conflict>
</comment>
<comment type="sequence caution" evidence="3">
    <conflict type="erroneous initiation">
        <sequence resource="EMBL-CDS" id="AAI09458"/>
    </conflict>
</comment>
<gene>
    <name type="ORF">im:6907446</name>
    <name type="ORF">si:dkeyp-118h3.6</name>
</gene>
<proteinExistence type="evidence at transcript level"/>
<sequence length="227" mass="24860">MASHRTDRTKNPTSNGDVSKVDLLLHPELLSQEFIQLMLQERNIAVSDPEDRDRLTGLYLQHVIPLPQRELPRSRWGKRMEKSRPRLSSSSTHSSSTDSGRKRPLIVFDGSSTSTGCVKLKKPDSSSAPVTTDRLKPPVSSVSLTNPIRKLSGASTNCSSSNFSNRTPVSSSGAIPKSPSNHSNSSVHSNNATSKLKRTSPSKGEPDTAKDIKSPETKKKIQHITWP</sequence>
<organism>
    <name type="scientific">Danio rerio</name>
    <name type="common">Zebrafish</name>
    <name type="synonym">Brachydanio rerio</name>
    <dbReference type="NCBI Taxonomy" id="7955"/>
    <lineage>
        <taxon>Eukaryota</taxon>
        <taxon>Metazoa</taxon>
        <taxon>Chordata</taxon>
        <taxon>Craniata</taxon>
        <taxon>Vertebrata</taxon>
        <taxon>Euteleostomi</taxon>
        <taxon>Actinopterygii</taxon>
        <taxon>Neopterygii</taxon>
        <taxon>Teleostei</taxon>
        <taxon>Ostariophysi</taxon>
        <taxon>Cypriniformes</taxon>
        <taxon>Danionidae</taxon>
        <taxon>Danioninae</taxon>
        <taxon>Danio</taxon>
    </lineage>
</organism>
<feature type="chain" id="PRO_0000268863" description="Ashwin">
    <location>
        <begin position="1"/>
        <end position="227"/>
    </location>
</feature>
<feature type="region of interest" description="Disordered" evidence="2">
    <location>
        <begin position="71"/>
        <end position="227"/>
    </location>
</feature>
<feature type="compositionally biased region" description="Basic and acidic residues" evidence="2">
    <location>
        <begin position="71"/>
        <end position="84"/>
    </location>
</feature>
<feature type="compositionally biased region" description="Low complexity" evidence="2">
    <location>
        <begin position="88"/>
        <end position="98"/>
    </location>
</feature>
<feature type="compositionally biased region" description="Polar residues" evidence="2">
    <location>
        <begin position="153"/>
        <end position="173"/>
    </location>
</feature>
<feature type="compositionally biased region" description="Low complexity" evidence="2">
    <location>
        <begin position="178"/>
        <end position="191"/>
    </location>
</feature>
<feature type="compositionally biased region" description="Basic and acidic residues" evidence="2">
    <location>
        <begin position="204"/>
        <end position="219"/>
    </location>
</feature>
<feature type="sequence conflict" description="In Ref. 2; AAH93350." evidence="3" ref="2">
    <original>S</original>
    <variation>L</variation>
    <location>
        <position position="161"/>
    </location>
</feature>
<name>ASHWN_DANRE</name>